<evidence type="ECO:0000250" key="1"/>
<evidence type="ECO:0000250" key="2">
    <source>
        <dbReference type="UniProtKB" id="O00287"/>
    </source>
</evidence>
<evidence type="ECO:0000255" key="3"/>
<evidence type="ECO:0000256" key="4">
    <source>
        <dbReference type="SAM" id="MobiDB-lite"/>
    </source>
</evidence>
<organism>
    <name type="scientific">Mus musculus</name>
    <name type="common">Mouse</name>
    <dbReference type="NCBI Taxonomy" id="10090"/>
    <lineage>
        <taxon>Eukaryota</taxon>
        <taxon>Metazoa</taxon>
        <taxon>Chordata</taxon>
        <taxon>Craniata</taxon>
        <taxon>Vertebrata</taxon>
        <taxon>Euteleostomi</taxon>
        <taxon>Mammalia</taxon>
        <taxon>Eutheria</taxon>
        <taxon>Euarchontoglires</taxon>
        <taxon>Glires</taxon>
        <taxon>Rodentia</taxon>
        <taxon>Myomorpha</taxon>
        <taxon>Muroidea</taxon>
        <taxon>Muridae</taxon>
        <taxon>Murinae</taxon>
        <taxon>Mus</taxon>
        <taxon>Mus</taxon>
    </lineage>
</organism>
<keyword id="KW-0238">DNA-binding</keyword>
<keyword id="KW-1017">Isopeptide bond</keyword>
<keyword id="KW-0539">Nucleus</keyword>
<keyword id="KW-0597">Phosphoprotein</keyword>
<keyword id="KW-1185">Reference proteome</keyword>
<keyword id="KW-0832">Ubl conjugation</keyword>
<name>RFXAP_MOUSE</name>
<accession>Q8VCG9</accession>
<accession>Q91Y54</accession>
<feature type="chain" id="PRO_0000300252" description="Regulatory factor X-associated protein">
    <location>
        <begin position="1"/>
        <end position="231"/>
    </location>
</feature>
<feature type="region of interest" description="Disordered" evidence="4">
    <location>
        <begin position="1"/>
        <end position="163"/>
    </location>
</feature>
<feature type="short sequence motif" description="Nuclear localization signal" evidence="3">
    <location>
        <begin position="123"/>
        <end position="138"/>
    </location>
</feature>
<feature type="compositionally biased region" description="Acidic residues" evidence="4">
    <location>
        <begin position="50"/>
        <end position="65"/>
    </location>
</feature>
<feature type="compositionally biased region" description="Basic residues" evidence="4">
    <location>
        <begin position="115"/>
        <end position="138"/>
    </location>
</feature>
<feature type="cross-link" description="Glycyl lysine isopeptide (Lys-Gly) (interchain with G-Cter in SUMO2)" evidence="2">
    <location>
        <position position="157"/>
    </location>
</feature>
<sequence length="231" mass="24787">MEAQAVPEGSGPSTASPRTAPPVTVLVMRQDEAEADGALRPGLAGSEAAADAEDEAGDDDADLLDTSDPAGGGESAASPEELEDEDAEGGGAARRRGSKTCTYEGCRETTSQVAKQRKPWMCKKHRNKMYKDKYKKKKSDQALGSGGPSAASTGNVKLEESTDNILSIVKQRTGSFGDRPARPTLLEQVLNQKRLSLLRSPEVVQFLQKQQQLLNQQVLEQRQQHFPGAPV</sequence>
<reference key="1">
    <citation type="journal article" date="2001" name="Mol. Cell. Biol.">
        <title>Expression of the three human major histocompatibility complex class II isotypes exhibits a differential dependence on the transcription factor RFXAP.</title>
        <authorList>
            <person name="Peretti M."/>
            <person name="Villard J."/>
            <person name="Barras E."/>
            <person name="Zufferey M."/>
            <person name="Reith W."/>
        </authorList>
    </citation>
    <scope>NUCLEOTIDE SEQUENCE [MRNA]</scope>
    <scope>USE OF A NON-AUG INITIATOR START CODON</scope>
    <source>
        <tissue>Spleen</tissue>
    </source>
</reference>
<reference key="2">
    <citation type="journal article" date="2004" name="Genome Res.">
        <title>The status, quality, and expansion of the NIH full-length cDNA project: the Mammalian Gene Collection (MGC).</title>
        <authorList>
            <consortium name="The MGC Project Team"/>
        </authorList>
    </citation>
    <scope>NUCLEOTIDE SEQUENCE [LARGE SCALE MRNA]</scope>
    <source>
        <strain>FVB/N</strain>
        <tissue>Kidney</tissue>
    </source>
</reference>
<proteinExistence type="evidence at transcript level"/>
<dbReference type="EMBL" id="AF335512">
    <property type="protein sequence ID" value="AAK38586.1"/>
    <property type="molecule type" value="mRNA"/>
</dbReference>
<dbReference type="EMBL" id="BC019935">
    <property type="protein sequence ID" value="AAH19935.2"/>
    <property type="molecule type" value="mRNA"/>
</dbReference>
<dbReference type="CCDS" id="CCDS50907.1"/>
<dbReference type="RefSeq" id="NP_573494.1">
    <property type="nucleotide sequence ID" value="NM_133231.2"/>
</dbReference>
<dbReference type="SMR" id="Q8VCG9"/>
<dbReference type="BioGRID" id="228427">
    <property type="interactions" value="1"/>
</dbReference>
<dbReference type="FunCoup" id="Q8VCG9">
    <property type="interactions" value="2465"/>
</dbReference>
<dbReference type="IntAct" id="Q8VCG9">
    <property type="interactions" value="1"/>
</dbReference>
<dbReference type="STRING" id="10090.ENSMUSP00000040917"/>
<dbReference type="PhosphoSitePlus" id="Q8VCG9"/>
<dbReference type="jPOST" id="Q8VCG9"/>
<dbReference type="PaxDb" id="10090-ENSMUSP00000040917"/>
<dbReference type="ProteomicsDB" id="253120"/>
<dbReference type="Pumba" id="Q8VCG9"/>
<dbReference type="Antibodypedia" id="8059">
    <property type="antibodies" value="180 antibodies from 24 providers"/>
</dbReference>
<dbReference type="DNASU" id="170767"/>
<dbReference type="Ensembl" id="ENSMUST00000044373.6">
    <property type="protein sequence ID" value="ENSMUSP00000040917.5"/>
    <property type="gene ID" value="ENSMUSG00000036615.8"/>
</dbReference>
<dbReference type="GeneID" id="170767"/>
<dbReference type="KEGG" id="mmu:170767"/>
<dbReference type="UCSC" id="uc008pfw.1">
    <property type="organism name" value="mouse"/>
</dbReference>
<dbReference type="AGR" id="MGI:2180854"/>
<dbReference type="CTD" id="5994"/>
<dbReference type="MGI" id="MGI:2180854">
    <property type="gene designation" value="Rfxap"/>
</dbReference>
<dbReference type="eggNOG" id="ENOG502RYED">
    <property type="taxonomic scope" value="Eukaryota"/>
</dbReference>
<dbReference type="GeneTree" id="ENSGT00390000006573"/>
<dbReference type="InParanoid" id="Q8VCG9"/>
<dbReference type="OMA" id="HPCGGQD"/>
<dbReference type="OrthoDB" id="10065946at2759"/>
<dbReference type="PhylomeDB" id="Q8VCG9"/>
<dbReference type="BioGRID-ORCS" id="170767">
    <property type="hits" value="4 hits in 76 CRISPR screens"/>
</dbReference>
<dbReference type="ChiTaRS" id="Rfxap">
    <property type="organism name" value="mouse"/>
</dbReference>
<dbReference type="PRO" id="PR:Q8VCG9"/>
<dbReference type="Proteomes" id="UP000000589">
    <property type="component" value="Chromosome 3"/>
</dbReference>
<dbReference type="RNAct" id="Q8VCG9">
    <property type="molecule type" value="protein"/>
</dbReference>
<dbReference type="Bgee" id="ENSMUSG00000036615">
    <property type="expression patterns" value="Expressed in spermatocyte and 244 other cell types or tissues"/>
</dbReference>
<dbReference type="ExpressionAtlas" id="Q8VCG9">
    <property type="expression patterns" value="baseline and differential"/>
</dbReference>
<dbReference type="GO" id="GO:0016607">
    <property type="term" value="C:nuclear speck"/>
    <property type="evidence" value="ECO:0007669"/>
    <property type="project" value="Ensembl"/>
</dbReference>
<dbReference type="GO" id="GO:0005634">
    <property type="term" value="C:nucleus"/>
    <property type="evidence" value="ECO:0000314"/>
    <property type="project" value="MGI"/>
</dbReference>
<dbReference type="GO" id="GO:0090575">
    <property type="term" value="C:RNA polymerase II transcription regulator complex"/>
    <property type="evidence" value="ECO:0007669"/>
    <property type="project" value="Ensembl"/>
</dbReference>
<dbReference type="GO" id="GO:0003677">
    <property type="term" value="F:DNA binding"/>
    <property type="evidence" value="ECO:0000314"/>
    <property type="project" value="MGI"/>
</dbReference>
<dbReference type="GO" id="GO:0001228">
    <property type="term" value="F:DNA-binding transcription activator activity, RNA polymerase II-specific"/>
    <property type="evidence" value="ECO:0007669"/>
    <property type="project" value="Ensembl"/>
</dbReference>
<dbReference type="GO" id="GO:0000977">
    <property type="term" value="F:RNA polymerase II transcription regulatory region sequence-specific DNA binding"/>
    <property type="evidence" value="ECO:0007669"/>
    <property type="project" value="Ensembl"/>
</dbReference>
<dbReference type="GO" id="GO:0045893">
    <property type="term" value="P:positive regulation of DNA-templated transcription"/>
    <property type="evidence" value="ECO:0000314"/>
    <property type="project" value="MGI"/>
</dbReference>
<dbReference type="Gene3D" id="6.10.290.30">
    <property type="entry name" value="Regulatory factor X-associated C-terminal binding domain"/>
    <property type="match status" value="1"/>
</dbReference>
<dbReference type="InterPro" id="IPR038308">
    <property type="entry name" value="RFXAP_C_sf"/>
</dbReference>
<dbReference type="InterPro" id="IPR029316">
    <property type="entry name" value="RFXAP_RFXANK-bd"/>
</dbReference>
<dbReference type="PANTHER" id="PTHR15110">
    <property type="entry name" value="REGULATORY FACTOR X-ASSOCIATED PROTEIN"/>
    <property type="match status" value="1"/>
</dbReference>
<dbReference type="PANTHER" id="PTHR15110:SF2">
    <property type="entry name" value="REGULATORY FACTOR X-ASSOCIATED PROTEIN"/>
    <property type="match status" value="1"/>
</dbReference>
<dbReference type="Pfam" id="PF15289">
    <property type="entry name" value="RFXA_RFXANK_bdg"/>
    <property type="match status" value="1"/>
</dbReference>
<comment type="function">
    <text evidence="1">Part of the RFX complex that binds to the X-box of MHC II promoters.</text>
</comment>
<comment type="subunit">
    <text evidence="1">RFX consists of at least 3 different subunits; RFXAP, RFX5 and RFX-B/RFXANK; with each subunit representing a separate complementation group. RFX forms cooperative DNA binding complexes with X2BP and CBF/NF-Y. RFX associates with CIITA to form an active transcriptional complex (By similarity).</text>
</comment>
<comment type="subcellular location">
    <subcellularLocation>
        <location evidence="1">Nucleus</location>
    </subcellularLocation>
</comment>
<comment type="PTM">
    <text evidence="1">Phosphorylated.</text>
</comment>
<gene>
    <name type="primary">Rfxap</name>
</gene>
<protein>
    <recommendedName>
        <fullName>Regulatory factor X-associated protein</fullName>
        <shortName>RFX-associated protein</shortName>
    </recommendedName>
</protein>